<gene>
    <name evidence="1" type="primary">rpiA</name>
    <name type="ordered locus">OE_4185F</name>
</gene>
<accession>B0R7H0</accession>
<name>RPIA_HALS3</name>
<sequence length="225" mass="22589">MKQAGGSAEQKRRAGEAAVAEEVTEGAVVGLGTGSTVAHAIRALGAEASDVSGVATSFESRRRAVDAGVTVTSLEAASVDVAIDGADQVADGVLVKGGGAAHTREKYVAASADRFVVVADPSKESDVVDVPVPVAVVPDAWPVVVDRVEALGGTATLRDAERKDGPVVTDTGSLVVDCDFGAIETPEAVAASLSAVPGVVEHGLFVGMADAVYVGTDDGVRVRDP</sequence>
<feature type="chain" id="PRO_1000097668" description="Ribose-5-phosphate isomerase A">
    <location>
        <begin position="1"/>
        <end position="225"/>
    </location>
</feature>
<feature type="active site" description="Proton acceptor" evidence="1">
    <location>
        <position position="105"/>
    </location>
</feature>
<feature type="binding site" evidence="1">
    <location>
        <begin position="33"/>
        <end position="36"/>
    </location>
    <ligand>
        <name>substrate</name>
    </ligand>
</feature>
<feature type="binding site" evidence="1">
    <location>
        <begin position="84"/>
        <end position="87"/>
    </location>
    <ligand>
        <name>substrate</name>
    </ligand>
</feature>
<feature type="binding site" evidence="1">
    <location>
        <begin position="96"/>
        <end position="99"/>
    </location>
    <ligand>
        <name>substrate</name>
    </ligand>
</feature>
<feature type="binding site" evidence="1">
    <location>
        <position position="123"/>
    </location>
    <ligand>
        <name>substrate</name>
    </ligand>
</feature>
<comment type="function">
    <text evidence="1">Catalyzes the reversible conversion of ribose-5-phosphate to ribulose 5-phosphate.</text>
</comment>
<comment type="catalytic activity">
    <reaction evidence="1">
        <text>aldehydo-D-ribose 5-phosphate = D-ribulose 5-phosphate</text>
        <dbReference type="Rhea" id="RHEA:14657"/>
        <dbReference type="ChEBI" id="CHEBI:58121"/>
        <dbReference type="ChEBI" id="CHEBI:58273"/>
        <dbReference type="EC" id="5.3.1.6"/>
    </reaction>
</comment>
<comment type="pathway">
    <text evidence="1">Carbohydrate degradation; pentose phosphate pathway; D-ribose 5-phosphate from D-ribulose 5-phosphate (non-oxidative stage): step 1/1.</text>
</comment>
<comment type="subunit">
    <text evidence="1">Homodimer.</text>
</comment>
<comment type="similarity">
    <text evidence="1">Belongs to the ribose 5-phosphate isomerase family.</text>
</comment>
<dbReference type="EC" id="5.3.1.6" evidence="1"/>
<dbReference type="EMBL" id="AM774415">
    <property type="protein sequence ID" value="CAP14689.1"/>
    <property type="molecule type" value="Genomic_DNA"/>
</dbReference>
<dbReference type="RefSeq" id="WP_010903689.1">
    <property type="nucleotide sequence ID" value="NC_010364.1"/>
</dbReference>
<dbReference type="SMR" id="B0R7H0"/>
<dbReference type="EnsemblBacteria" id="CAP14689">
    <property type="protein sequence ID" value="CAP14689"/>
    <property type="gene ID" value="OE_4185F"/>
</dbReference>
<dbReference type="GeneID" id="68694820"/>
<dbReference type="KEGG" id="hsl:OE_4185F"/>
<dbReference type="HOGENOM" id="CLU_056590_1_1_2"/>
<dbReference type="PhylomeDB" id="B0R7H0"/>
<dbReference type="UniPathway" id="UPA00115">
    <property type="reaction ID" value="UER00412"/>
</dbReference>
<dbReference type="Proteomes" id="UP000001321">
    <property type="component" value="Chromosome"/>
</dbReference>
<dbReference type="GO" id="GO:0005829">
    <property type="term" value="C:cytosol"/>
    <property type="evidence" value="ECO:0007669"/>
    <property type="project" value="TreeGrafter"/>
</dbReference>
<dbReference type="GO" id="GO:0004751">
    <property type="term" value="F:ribose-5-phosphate isomerase activity"/>
    <property type="evidence" value="ECO:0007669"/>
    <property type="project" value="UniProtKB-UniRule"/>
</dbReference>
<dbReference type="GO" id="GO:0006014">
    <property type="term" value="P:D-ribose metabolic process"/>
    <property type="evidence" value="ECO:0007669"/>
    <property type="project" value="TreeGrafter"/>
</dbReference>
<dbReference type="GO" id="GO:0009052">
    <property type="term" value="P:pentose-phosphate shunt, non-oxidative branch"/>
    <property type="evidence" value="ECO:0007669"/>
    <property type="project" value="UniProtKB-UniRule"/>
</dbReference>
<dbReference type="CDD" id="cd01398">
    <property type="entry name" value="RPI_A"/>
    <property type="match status" value="1"/>
</dbReference>
<dbReference type="FunFam" id="3.30.70.260:FF:000018">
    <property type="entry name" value="Ribose-5-phosphate isomerase A"/>
    <property type="match status" value="1"/>
</dbReference>
<dbReference type="Gene3D" id="3.30.70.260">
    <property type="match status" value="1"/>
</dbReference>
<dbReference type="Gene3D" id="3.40.50.1360">
    <property type="match status" value="1"/>
</dbReference>
<dbReference type="HAMAP" id="MF_00170">
    <property type="entry name" value="Rib_5P_isom_A"/>
    <property type="match status" value="1"/>
</dbReference>
<dbReference type="InterPro" id="IPR037171">
    <property type="entry name" value="NagB/RpiA_transferase-like"/>
</dbReference>
<dbReference type="InterPro" id="IPR020672">
    <property type="entry name" value="Ribose5P_isomerase_typA_subgr"/>
</dbReference>
<dbReference type="InterPro" id="IPR004788">
    <property type="entry name" value="Ribose5P_isomerase_type_A"/>
</dbReference>
<dbReference type="NCBIfam" id="NF001924">
    <property type="entry name" value="PRK00702.1"/>
    <property type="match status" value="1"/>
</dbReference>
<dbReference type="NCBIfam" id="TIGR00021">
    <property type="entry name" value="rpiA"/>
    <property type="match status" value="1"/>
</dbReference>
<dbReference type="PANTHER" id="PTHR11934">
    <property type="entry name" value="RIBOSE-5-PHOSPHATE ISOMERASE"/>
    <property type="match status" value="1"/>
</dbReference>
<dbReference type="PANTHER" id="PTHR11934:SF0">
    <property type="entry name" value="RIBOSE-5-PHOSPHATE ISOMERASE"/>
    <property type="match status" value="1"/>
</dbReference>
<dbReference type="Pfam" id="PF06026">
    <property type="entry name" value="Rib_5-P_isom_A"/>
    <property type="match status" value="1"/>
</dbReference>
<dbReference type="SUPFAM" id="SSF75445">
    <property type="entry name" value="D-ribose-5-phosphate isomerase (RpiA), lid domain"/>
    <property type="match status" value="1"/>
</dbReference>
<dbReference type="SUPFAM" id="SSF100950">
    <property type="entry name" value="NagB/RpiA/CoA transferase-like"/>
    <property type="match status" value="1"/>
</dbReference>
<organism>
    <name type="scientific">Halobacterium salinarum (strain ATCC 29341 / DSM 671 / R1)</name>
    <dbReference type="NCBI Taxonomy" id="478009"/>
    <lineage>
        <taxon>Archaea</taxon>
        <taxon>Methanobacteriati</taxon>
        <taxon>Methanobacteriota</taxon>
        <taxon>Stenosarchaea group</taxon>
        <taxon>Halobacteria</taxon>
        <taxon>Halobacteriales</taxon>
        <taxon>Halobacteriaceae</taxon>
        <taxon>Halobacterium</taxon>
        <taxon>Halobacterium salinarum NRC-34001</taxon>
    </lineage>
</organism>
<keyword id="KW-0413">Isomerase</keyword>
<protein>
    <recommendedName>
        <fullName evidence="1">Ribose-5-phosphate isomerase A</fullName>
        <ecNumber evidence="1">5.3.1.6</ecNumber>
    </recommendedName>
    <alternativeName>
        <fullName evidence="1">Phosphoriboisomerase A</fullName>
        <shortName evidence="1">PRI</shortName>
    </alternativeName>
</protein>
<proteinExistence type="inferred from homology"/>
<evidence type="ECO:0000255" key="1">
    <source>
        <dbReference type="HAMAP-Rule" id="MF_00170"/>
    </source>
</evidence>
<reference key="1">
    <citation type="journal article" date="2008" name="Genomics">
        <title>Evolution in the laboratory: the genome of Halobacterium salinarum strain R1 compared to that of strain NRC-1.</title>
        <authorList>
            <person name="Pfeiffer F."/>
            <person name="Schuster S.C."/>
            <person name="Broicher A."/>
            <person name="Falb M."/>
            <person name="Palm P."/>
            <person name="Rodewald K."/>
            <person name="Ruepp A."/>
            <person name="Soppa J."/>
            <person name="Tittor J."/>
            <person name="Oesterhelt D."/>
        </authorList>
    </citation>
    <scope>NUCLEOTIDE SEQUENCE [LARGE SCALE GENOMIC DNA]</scope>
    <source>
        <strain>ATCC 29341 / DSM 671 / R1</strain>
    </source>
</reference>